<protein>
    <recommendedName>
        <fullName evidence="1">ATP synthase subunit c, chloroplastic</fullName>
    </recommendedName>
    <alternativeName>
        <fullName evidence="1">ATP synthase F(0) sector subunit c</fullName>
    </alternativeName>
    <alternativeName>
        <fullName evidence="1">ATPase subunit III</fullName>
    </alternativeName>
    <alternativeName>
        <fullName evidence="1">F-type ATPase subunit c</fullName>
        <shortName evidence="1">F-ATPase subunit c</shortName>
    </alternativeName>
    <alternativeName>
        <fullName evidence="1">Lipid-binding protein</fullName>
    </alternativeName>
</protein>
<geneLocation type="chloroplast"/>
<sequence length="81" mass="7990">MNPLISAASVIAAGLAVGLASIGPGVGQGTAAGQAVEGIARQPEAEGKIRGTLLLSLAFMEALTIYGLVVALALLFANPFV</sequence>
<proteinExistence type="inferred from homology"/>
<reference key="1">
    <citation type="journal article" date="2008" name="Theor. Appl. Genet.">
        <title>The complete nucleotide sequence of the cassava (Manihot esculenta) chloroplast genome and the evolution of atpF in Malpighiales: RNA editing and multiple losses of a group II intron.</title>
        <authorList>
            <person name="Daniell H."/>
            <person name="Wurdack K.J."/>
            <person name="Kanagaraj A."/>
            <person name="Lee S.-B."/>
            <person name="Saski C."/>
            <person name="Jansen R.K."/>
        </authorList>
    </citation>
    <scope>NUCLEOTIDE SEQUENCE [LARGE SCALE GENOMIC DNA]</scope>
    <source>
        <strain>cv. TME3</strain>
    </source>
</reference>
<evidence type="ECO:0000255" key="1">
    <source>
        <dbReference type="HAMAP-Rule" id="MF_01396"/>
    </source>
</evidence>
<comment type="function">
    <text evidence="1">F(1)F(0) ATP synthase produces ATP from ADP in the presence of a proton or sodium gradient. F-type ATPases consist of two structural domains, F(1) containing the extramembraneous catalytic core and F(0) containing the membrane proton channel, linked together by a central stalk and a peripheral stalk. During catalysis, ATP synthesis in the catalytic domain of F(1) is coupled via a rotary mechanism of the central stalk subunits to proton translocation.</text>
</comment>
<comment type="function">
    <text evidence="1">Key component of the F(0) channel; it plays a direct role in translocation across the membrane. A homomeric c-ring of between 10-14 subunits forms the central stalk rotor element with the F(1) delta and epsilon subunits.</text>
</comment>
<comment type="subunit">
    <text evidence="1">F-type ATPases have 2 components, F(1) - the catalytic core - and F(0) - the membrane proton channel. F(1) has five subunits: alpha(3), beta(3), gamma(1), delta(1), epsilon(1). F(0) has four main subunits: a(1), b(1), b'(1) and c(10-14). The alpha and beta chains form an alternating ring which encloses part of the gamma chain. F(1) is attached to F(0) by a central stalk formed by the gamma and epsilon chains, while a peripheral stalk is formed by the delta, b and b' chains.</text>
</comment>
<comment type="subcellular location">
    <subcellularLocation>
        <location evidence="1">Plastid</location>
        <location evidence="1">Chloroplast thylakoid membrane</location>
        <topology evidence="1">Multi-pass membrane protein</topology>
    </subcellularLocation>
</comment>
<comment type="miscellaneous">
    <text>In plastids the F-type ATPase is also known as CF(1)CF(0).</text>
</comment>
<comment type="similarity">
    <text evidence="1">Belongs to the ATPase C chain family.</text>
</comment>
<gene>
    <name evidence="1" type="primary">atpH</name>
</gene>
<dbReference type="EMBL" id="EU117376">
    <property type="protein sequence ID" value="ABV66141.1"/>
    <property type="molecule type" value="Genomic_DNA"/>
</dbReference>
<dbReference type="RefSeq" id="YP_001718424.1">
    <property type="nucleotide sequence ID" value="NC_010433.1"/>
</dbReference>
<dbReference type="SMR" id="B1NWD7"/>
<dbReference type="GeneID" id="5999963"/>
<dbReference type="KEGG" id="mesc:5999963"/>
<dbReference type="OrthoDB" id="438052at2759"/>
<dbReference type="GO" id="GO:0009535">
    <property type="term" value="C:chloroplast thylakoid membrane"/>
    <property type="evidence" value="ECO:0007669"/>
    <property type="project" value="UniProtKB-SubCell"/>
</dbReference>
<dbReference type="GO" id="GO:0045259">
    <property type="term" value="C:proton-transporting ATP synthase complex"/>
    <property type="evidence" value="ECO:0007669"/>
    <property type="project" value="UniProtKB-KW"/>
</dbReference>
<dbReference type="GO" id="GO:0033177">
    <property type="term" value="C:proton-transporting two-sector ATPase complex, proton-transporting domain"/>
    <property type="evidence" value="ECO:0007669"/>
    <property type="project" value="InterPro"/>
</dbReference>
<dbReference type="GO" id="GO:0008289">
    <property type="term" value="F:lipid binding"/>
    <property type="evidence" value="ECO:0007669"/>
    <property type="project" value="UniProtKB-KW"/>
</dbReference>
<dbReference type="GO" id="GO:0046933">
    <property type="term" value="F:proton-transporting ATP synthase activity, rotational mechanism"/>
    <property type="evidence" value="ECO:0007669"/>
    <property type="project" value="UniProtKB-UniRule"/>
</dbReference>
<dbReference type="CDD" id="cd18183">
    <property type="entry name" value="ATP-synt_Fo_c_ATPH"/>
    <property type="match status" value="1"/>
</dbReference>
<dbReference type="FunFam" id="1.20.20.10:FF:000001">
    <property type="entry name" value="ATP synthase subunit c, chloroplastic"/>
    <property type="match status" value="1"/>
</dbReference>
<dbReference type="Gene3D" id="1.20.20.10">
    <property type="entry name" value="F1F0 ATP synthase subunit C"/>
    <property type="match status" value="1"/>
</dbReference>
<dbReference type="HAMAP" id="MF_01396">
    <property type="entry name" value="ATP_synth_c_bact"/>
    <property type="match status" value="1"/>
</dbReference>
<dbReference type="InterPro" id="IPR005953">
    <property type="entry name" value="ATP_synth_csu_bac/chlpt"/>
</dbReference>
<dbReference type="InterPro" id="IPR000454">
    <property type="entry name" value="ATP_synth_F0_csu"/>
</dbReference>
<dbReference type="InterPro" id="IPR020537">
    <property type="entry name" value="ATP_synth_F0_csu_DDCD_BS"/>
</dbReference>
<dbReference type="InterPro" id="IPR038662">
    <property type="entry name" value="ATP_synth_F0_csu_sf"/>
</dbReference>
<dbReference type="InterPro" id="IPR002379">
    <property type="entry name" value="ATPase_proteolipid_c-like_dom"/>
</dbReference>
<dbReference type="InterPro" id="IPR035921">
    <property type="entry name" value="F/V-ATP_Csub_sf"/>
</dbReference>
<dbReference type="NCBIfam" id="TIGR01260">
    <property type="entry name" value="ATP_synt_c"/>
    <property type="match status" value="1"/>
</dbReference>
<dbReference type="NCBIfam" id="NF005608">
    <property type="entry name" value="PRK07354.1"/>
    <property type="match status" value="1"/>
</dbReference>
<dbReference type="PANTHER" id="PTHR10031">
    <property type="entry name" value="ATP SYNTHASE LIPID-BINDING PROTEIN, MITOCHONDRIAL"/>
    <property type="match status" value="1"/>
</dbReference>
<dbReference type="PANTHER" id="PTHR10031:SF0">
    <property type="entry name" value="ATPASE PROTEIN 9"/>
    <property type="match status" value="1"/>
</dbReference>
<dbReference type="Pfam" id="PF00137">
    <property type="entry name" value="ATP-synt_C"/>
    <property type="match status" value="1"/>
</dbReference>
<dbReference type="PRINTS" id="PR00124">
    <property type="entry name" value="ATPASEC"/>
</dbReference>
<dbReference type="SUPFAM" id="SSF81333">
    <property type="entry name" value="F1F0 ATP synthase subunit C"/>
    <property type="match status" value="1"/>
</dbReference>
<dbReference type="PROSITE" id="PS00605">
    <property type="entry name" value="ATPASE_C"/>
    <property type="match status" value="1"/>
</dbReference>
<feature type="chain" id="PRO_0000362934" description="ATP synthase subunit c, chloroplastic">
    <location>
        <begin position="1"/>
        <end position="81"/>
    </location>
</feature>
<feature type="transmembrane region" description="Helical" evidence="1">
    <location>
        <begin position="3"/>
        <end position="23"/>
    </location>
</feature>
<feature type="transmembrane region" description="Helical" evidence="1">
    <location>
        <begin position="57"/>
        <end position="77"/>
    </location>
</feature>
<feature type="site" description="Reversibly protonated during proton transport" evidence="1">
    <location>
        <position position="61"/>
    </location>
</feature>
<accession>B1NWD7</accession>
<name>ATPH_MANES</name>
<keyword id="KW-0066">ATP synthesis</keyword>
<keyword id="KW-0138">CF(0)</keyword>
<keyword id="KW-0150">Chloroplast</keyword>
<keyword id="KW-0375">Hydrogen ion transport</keyword>
<keyword id="KW-0406">Ion transport</keyword>
<keyword id="KW-0446">Lipid-binding</keyword>
<keyword id="KW-0472">Membrane</keyword>
<keyword id="KW-0934">Plastid</keyword>
<keyword id="KW-0793">Thylakoid</keyword>
<keyword id="KW-0812">Transmembrane</keyword>
<keyword id="KW-1133">Transmembrane helix</keyword>
<keyword id="KW-0813">Transport</keyword>
<organism>
    <name type="scientific">Manihot esculenta</name>
    <name type="common">Cassava</name>
    <name type="synonym">Jatropha manihot</name>
    <dbReference type="NCBI Taxonomy" id="3983"/>
    <lineage>
        <taxon>Eukaryota</taxon>
        <taxon>Viridiplantae</taxon>
        <taxon>Streptophyta</taxon>
        <taxon>Embryophyta</taxon>
        <taxon>Tracheophyta</taxon>
        <taxon>Spermatophyta</taxon>
        <taxon>Magnoliopsida</taxon>
        <taxon>eudicotyledons</taxon>
        <taxon>Gunneridae</taxon>
        <taxon>Pentapetalae</taxon>
        <taxon>rosids</taxon>
        <taxon>fabids</taxon>
        <taxon>Malpighiales</taxon>
        <taxon>Euphorbiaceae</taxon>
        <taxon>Crotonoideae</taxon>
        <taxon>Manihoteae</taxon>
        <taxon>Manihot</taxon>
    </lineage>
</organism>